<sequence>MSPHTEGPLFAVLKNSRARPRPRESRLRRRVHKQMNISPTPKRYNSRGYEFPRSNDEAFHPFNREPPMVPSERILPEEYRVNSQMINKLIKQNKDLTQQLDRKQDEIDRLNVLVGSLRGKLIKYTELNKKLEQAAAGARQSSPDDVLQVNRTRPREPPAGGTRLDDRLSDLYSKLETLTELVVGSAAADRGARDHVHVPSAGATRTPSSGASVSHRPLQPGAASEDDILTQESAELKGLEDQIDLLKRKLLIKRENELRKLSLNKELLDLMEKLDVSRPAGPVPSSSTPPHCDQCHKAAYQTAAANGGHGVPAGAGSGAGAGASMPSPRNPPYMSMAQVLETPTPAHRSSHKPNDTLW</sequence>
<feature type="chain" id="PRO_0000409210" description="Spindle pole body component SPC42">
    <location>
        <begin position="1"/>
        <end position="358"/>
    </location>
</feature>
<feature type="region of interest" description="Disordered" evidence="3">
    <location>
        <begin position="1"/>
        <end position="43"/>
    </location>
</feature>
<feature type="region of interest" description="Disordered" evidence="3">
    <location>
        <begin position="135"/>
        <end position="166"/>
    </location>
</feature>
<feature type="region of interest" description="Disordered" evidence="3">
    <location>
        <begin position="189"/>
        <end position="226"/>
    </location>
</feature>
<feature type="region of interest" description="Disordered" evidence="3">
    <location>
        <begin position="310"/>
        <end position="358"/>
    </location>
</feature>
<feature type="coiled-coil region" evidence="2">
    <location>
        <begin position="82"/>
        <end position="140"/>
    </location>
</feature>
<feature type="coiled-coil region" evidence="2">
    <location>
        <begin position="226"/>
        <end position="275"/>
    </location>
</feature>
<feature type="compositionally biased region" description="Basic residues" evidence="3">
    <location>
        <begin position="16"/>
        <end position="33"/>
    </location>
</feature>
<feature type="compositionally biased region" description="Polar residues" evidence="3">
    <location>
        <begin position="203"/>
        <end position="212"/>
    </location>
</feature>
<feature type="compositionally biased region" description="Gly residues" evidence="3">
    <location>
        <begin position="310"/>
        <end position="321"/>
    </location>
</feature>
<accession>C5DGS4</accession>
<comment type="function">
    <text evidence="1">Forms a polymeric layer at the periphery of the spindle pole body (SPB) central plaque which has an essential function during SPB duplication and may facilitate attachment of the SPB to the nuclear membrane.</text>
</comment>
<comment type="subcellular location">
    <subcellularLocation>
        <location evidence="1">Nucleus</location>
    </subcellularLocation>
    <subcellularLocation>
        <location evidence="1">Cytoplasm</location>
        <location evidence="1">Cytoskeleton</location>
        <location evidence="1">Microtubule organizing center</location>
        <location evidence="1">Spindle pole body</location>
    </subcellularLocation>
</comment>
<comment type="similarity">
    <text evidence="4">Belongs to the SPC42 family.</text>
</comment>
<dbReference type="EMBL" id="CU928168">
    <property type="protein sequence ID" value="CAR22616.1"/>
    <property type="molecule type" value="Genomic_DNA"/>
</dbReference>
<dbReference type="RefSeq" id="XP_002553054.1">
    <property type="nucleotide sequence ID" value="XM_002553008.1"/>
</dbReference>
<dbReference type="SMR" id="C5DGS4"/>
<dbReference type="FunCoup" id="C5DGS4">
    <property type="interactions" value="213"/>
</dbReference>
<dbReference type="STRING" id="559295.C5DGS4"/>
<dbReference type="GeneID" id="8295287"/>
<dbReference type="KEGG" id="lth:KLTH0D07854g"/>
<dbReference type="eggNOG" id="ENOG502RYX7">
    <property type="taxonomic scope" value="Eukaryota"/>
</dbReference>
<dbReference type="HOGENOM" id="CLU_056211_0_0_1"/>
<dbReference type="InParanoid" id="C5DGS4"/>
<dbReference type="OMA" id="HNHATHR"/>
<dbReference type="OrthoDB" id="4061426at2759"/>
<dbReference type="Proteomes" id="UP000002036">
    <property type="component" value="Chromosome D"/>
</dbReference>
<dbReference type="GO" id="GO:0005737">
    <property type="term" value="C:cytoplasm"/>
    <property type="evidence" value="ECO:0007669"/>
    <property type="project" value="UniProtKB-KW"/>
</dbReference>
<dbReference type="GO" id="GO:0005634">
    <property type="term" value="C:nucleus"/>
    <property type="evidence" value="ECO:0007669"/>
    <property type="project" value="UniProtKB-SubCell"/>
</dbReference>
<dbReference type="GO" id="GO:0005816">
    <property type="term" value="C:spindle pole body"/>
    <property type="evidence" value="ECO:0007669"/>
    <property type="project" value="UniProtKB-SubCell"/>
</dbReference>
<dbReference type="Gene3D" id="1.20.5.1180">
    <property type="entry name" value="Geminin coiled-coil domain"/>
    <property type="match status" value="1"/>
</dbReference>
<dbReference type="InterPro" id="IPR021611">
    <property type="entry name" value="Spc42"/>
</dbReference>
<dbReference type="Pfam" id="PF11544">
    <property type="entry name" value="Spc42p"/>
    <property type="match status" value="1"/>
</dbReference>
<name>SPC42_LACTC</name>
<reference key="1">
    <citation type="journal article" date="2009" name="Genome Res.">
        <title>Comparative genomics of protoploid Saccharomycetaceae.</title>
        <authorList>
            <consortium name="The Genolevures Consortium"/>
            <person name="Souciet J.-L."/>
            <person name="Dujon B."/>
            <person name="Gaillardin C."/>
            <person name="Johnston M."/>
            <person name="Baret P.V."/>
            <person name="Cliften P."/>
            <person name="Sherman D.J."/>
            <person name="Weissenbach J."/>
            <person name="Westhof E."/>
            <person name="Wincker P."/>
            <person name="Jubin C."/>
            <person name="Poulain J."/>
            <person name="Barbe V."/>
            <person name="Segurens B."/>
            <person name="Artiguenave F."/>
            <person name="Anthouard V."/>
            <person name="Vacherie B."/>
            <person name="Val M.-E."/>
            <person name="Fulton R.S."/>
            <person name="Minx P."/>
            <person name="Wilson R."/>
            <person name="Durrens P."/>
            <person name="Jean G."/>
            <person name="Marck C."/>
            <person name="Martin T."/>
            <person name="Nikolski M."/>
            <person name="Rolland T."/>
            <person name="Seret M.-L."/>
            <person name="Casaregola S."/>
            <person name="Despons L."/>
            <person name="Fairhead C."/>
            <person name="Fischer G."/>
            <person name="Lafontaine I."/>
            <person name="Leh V."/>
            <person name="Lemaire M."/>
            <person name="de Montigny J."/>
            <person name="Neuveglise C."/>
            <person name="Thierry A."/>
            <person name="Blanc-Lenfle I."/>
            <person name="Bleykasten C."/>
            <person name="Diffels J."/>
            <person name="Fritsch E."/>
            <person name="Frangeul L."/>
            <person name="Goeffon A."/>
            <person name="Jauniaux N."/>
            <person name="Kachouri-Lafond R."/>
            <person name="Payen C."/>
            <person name="Potier S."/>
            <person name="Pribylova L."/>
            <person name="Ozanne C."/>
            <person name="Richard G.-F."/>
            <person name="Sacerdot C."/>
            <person name="Straub M.-L."/>
            <person name="Talla E."/>
        </authorList>
    </citation>
    <scope>NUCLEOTIDE SEQUENCE [LARGE SCALE GENOMIC DNA]</scope>
    <source>
        <strain>ATCC 56472 / CBS 6340 / NRRL Y-8284</strain>
    </source>
</reference>
<keyword id="KW-0175">Coiled coil</keyword>
<keyword id="KW-0963">Cytoplasm</keyword>
<keyword id="KW-0206">Cytoskeleton</keyword>
<keyword id="KW-0539">Nucleus</keyword>
<keyword id="KW-1185">Reference proteome</keyword>
<proteinExistence type="inferred from homology"/>
<gene>
    <name type="primary">SPC42</name>
    <name type="ordered locus">KLTH0D07854g</name>
</gene>
<protein>
    <recommendedName>
        <fullName>Spindle pole body component SPC42</fullName>
    </recommendedName>
</protein>
<organism>
    <name type="scientific">Lachancea thermotolerans (strain ATCC 56472 / CBS 6340 / NRRL Y-8284)</name>
    <name type="common">Yeast</name>
    <name type="synonym">Kluyveromyces thermotolerans</name>
    <dbReference type="NCBI Taxonomy" id="559295"/>
    <lineage>
        <taxon>Eukaryota</taxon>
        <taxon>Fungi</taxon>
        <taxon>Dikarya</taxon>
        <taxon>Ascomycota</taxon>
        <taxon>Saccharomycotina</taxon>
        <taxon>Saccharomycetes</taxon>
        <taxon>Saccharomycetales</taxon>
        <taxon>Saccharomycetaceae</taxon>
        <taxon>Lachancea</taxon>
    </lineage>
</organism>
<evidence type="ECO:0000250" key="1"/>
<evidence type="ECO:0000255" key="2"/>
<evidence type="ECO:0000256" key="3">
    <source>
        <dbReference type="SAM" id="MobiDB-lite"/>
    </source>
</evidence>
<evidence type="ECO:0000305" key="4"/>